<protein>
    <recommendedName>
        <fullName>Splicing factor U2AF 65 kDa subunit</fullName>
    </recommendedName>
    <alternativeName>
        <fullName>U2 auxiliary factor 65 kDa subunit</fullName>
        <shortName>U2AF65</shortName>
    </alternativeName>
    <alternativeName>
        <fullName>U2 snRNP auxiliary factor large subunit</fullName>
    </alternativeName>
</protein>
<evidence type="ECO:0000250" key="1"/>
<evidence type="ECO:0000255" key="2">
    <source>
        <dbReference type="PROSITE-ProRule" id="PRU00176"/>
    </source>
</evidence>
<evidence type="ECO:0000256" key="3">
    <source>
        <dbReference type="SAM" id="MobiDB-lite"/>
    </source>
</evidence>
<evidence type="ECO:0000305" key="4"/>
<evidence type="ECO:0000312" key="5">
    <source>
        <dbReference type="WormBase" id="Y92C3B.2a"/>
    </source>
</evidence>
<evidence type="ECO:0000312" key="6">
    <source>
        <dbReference type="WormBase" id="Y92C3B.2b"/>
    </source>
</evidence>
<comment type="function">
    <text evidence="1">Necessary for the splicing of pre-mRNA. Binds to the polypyrimidine tract of introns early during spliceosome assembly (By similarity).</text>
</comment>
<comment type="subunit">
    <text evidence="1">Forms a heterodimer with the U2AF small subunit.</text>
</comment>
<comment type="subcellular location">
    <subcellularLocation>
        <location>Nucleus</location>
    </subcellularLocation>
</comment>
<comment type="alternative products">
    <event type="alternative splicing"/>
    <isoform>
        <id>P90978-1</id>
        <name evidence="5">a</name>
        <sequence type="displayed"/>
    </isoform>
    <isoform>
        <id>P90978-2</id>
        <name evidence="6">b</name>
        <sequence type="described" ref="VSP_005904"/>
    </isoform>
    <text>Experimental confirmation may be lacking for some isoforms.</text>
</comment>
<keyword id="KW-0025">Alternative splicing</keyword>
<keyword id="KW-0507">mRNA processing</keyword>
<keyword id="KW-0508">mRNA splicing</keyword>
<keyword id="KW-0539">Nucleus</keyword>
<keyword id="KW-1185">Reference proteome</keyword>
<keyword id="KW-0677">Repeat</keyword>
<keyword id="KW-0694">RNA-binding</keyword>
<organism>
    <name type="scientific">Caenorhabditis elegans</name>
    <dbReference type="NCBI Taxonomy" id="6239"/>
    <lineage>
        <taxon>Eukaryota</taxon>
        <taxon>Metazoa</taxon>
        <taxon>Ecdysozoa</taxon>
        <taxon>Nematoda</taxon>
        <taxon>Chromadorea</taxon>
        <taxon>Rhabditida</taxon>
        <taxon>Rhabditina</taxon>
        <taxon>Rhabditomorpha</taxon>
        <taxon>Rhabditoidea</taxon>
        <taxon>Rhabditidae</taxon>
        <taxon>Peloderinae</taxon>
        <taxon>Caenorhabditis</taxon>
    </lineage>
</organism>
<gene>
    <name type="primary">uaf-1</name>
    <name type="ORF">Y92C3B.2</name>
</gene>
<sequence>MSDHQDGMKLEDIERQFLDVAQREGGLEAIQPTTGPLENEENLKSSTGGGGGEDDNDRKKRKRSRSRDRDTRRRSRSRDRGERRGGGGGGDRDRSRSRERRRGGGGRDEPRRRGGDDEARSRREPEPQKPREPKKYRFWDVPPTGFETTTPMEYKNMQAAGQVPRGSVQSAVPVVGPSVTCQSRRLYVGNIPFGCNEEAMLDFFNQQMHLCGLAQAPGNPILLCQINLDKNFAFIEFRSIDETTAGMAFDGINFMGQQLKVRRPRDYQPSQNTFDMNSRMPVSTIVVDSANKIFIGGLPNYLTEDQVKELLCSFGPLKAFSLNVDSQGNSKGYAFAEYLDPTLTDQAIAGLNGMQLGDKQLVVQLACANQQRHNTNLPNSASAIAGIDLSQGAGRATEILCLMNMVTEDELKADDEYEEILEDVRDECSKYGIVRSLEIPRPYEDHPVPGVGKVFVEFASTSDCQRAQAALTGRKFANRTVVTSYYDVDKYHNRQF</sequence>
<proteinExistence type="evidence at transcript level"/>
<reference key="1">
    <citation type="journal article" date="1997" name="Mol. Cell. Biol.">
        <title>Cloning of Caenorhabditis U2AF65: an alternatively spliced RNA containing a novel exon.</title>
        <authorList>
            <person name="Zorio D.A.R."/>
            <person name="Lea K."/>
            <person name="Blumenthal T."/>
        </authorList>
    </citation>
    <scope>NUCLEOTIDE SEQUENCE [MRNA] (ISOFORM A)</scope>
    <source>
        <strain>Bristol N2</strain>
        <tissue>Embryo</tissue>
    </source>
</reference>
<reference key="2">
    <citation type="submission" date="1998-07" db="EMBL/GenBank/DDBJ databases">
        <authorList>
            <person name="Zorio D.A.R."/>
        </authorList>
    </citation>
    <scope>SEQUENCE REVISION</scope>
</reference>
<reference key="3">
    <citation type="journal article" date="1998" name="Science">
        <title>Genome sequence of the nematode C. elegans: a platform for investigating biology.</title>
        <authorList>
            <consortium name="The C. elegans sequencing consortium"/>
        </authorList>
    </citation>
    <scope>NUCLEOTIDE SEQUENCE [LARGE SCALE GENOMIC DNA]</scope>
    <scope>ALTERNATIVE SPLICING</scope>
    <source>
        <strain>Bristol N2</strain>
    </source>
</reference>
<name>U2AF2_CAEEL</name>
<accession>P90978</accession>
<accession>O76839</accession>
<accession>Q95XT0</accession>
<accession>Q9N2X5</accession>
<feature type="chain" id="PRO_0000081991" description="Splicing factor U2AF 65 kDa subunit">
    <location>
        <begin position="1"/>
        <end position="496"/>
    </location>
</feature>
<feature type="domain" description="RRM 1" evidence="2">
    <location>
        <begin position="184"/>
        <end position="266"/>
    </location>
</feature>
<feature type="domain" description="RRM 2" evidence="2">
    <location>
        <begin position="291"/>
        <end position="368"/>
    </location>
</feature>
<feature type="domain" description="RRM 3" evidence="2">
    <location>
        <begin position="404"/>
        <end position="488"/>
    </location>
</feature>
<feature type="region of interest" description="Disordered" evidence="3">
    <location>
        <begin position="1"/>
        <end position="142"/>
    </location>
</feature>
<feature type="compositionally biased region" description="Basic and acidic residues" evidence="3">
    <location>
        <begin position="1"/>
        <end position="26"/>
    </location>
</feature>
<feature type="compositionally biased region" description="Basic residues" evidence="3">
    <location>
        <begin position="59"/>
        <end position="77"/>
    </location>
</feature>
<feature type="compositionally biased region" description="Basic and acidic residues" evidence="3">
    <location>
        <begin position="78"/>
        <end position="96"/>
    </location>
</feature>
<feature type="compositionally biased region" description="Basic and acidic residues" evidence="3">
    <location>
        <begin position="105"/>
        <end position="138"/>
    </location>
</feature>
<feature type="splice variant" id="VSP_005904" description="In isoform b." evidence="4">
    <location>
        <begin position="1"/>
        <end position="353"/>
    </location>
</feature>
<dbReference type="EMBL" id="U79157">
    <property type="protein sequence ID" value="AAC26982.1"/>
    <property type="molecule type" value="mRNA"/>
</dbReference>
<dbReference type="EMBL" id="FO080242">
    <property type="protein sequence ID" value="CCD62278.1"/>
    <property type="molecule type" value="Genomic_DNA"/>
</dbReference>
<dbReference type="EMBL" id="FO080242">
    <property type="protein sequence ID" value="CCD62279.1"/>
    <property type="molecule type" value="Genomic_DNA"/>
</dbReference>
<dbReference type="EMBL" id="FO080242">
    <property type="protein sequence ID" value="CCD62280.1"/>
    <property type="molecule type" value="Genomic_DNA"/>
</dbReference>
<dbReference type="RefSeq" id="NP_001022967.1">
    <molecule id="P90978-1"/>
    <property type="nucleotide sequence ID" value="NM_001027796.4"/>
</dbReference>
<dbReference type="RefSeq" id="NP_001022969.1">
    <property type="nucleotide sequence ID" value="NM_001027798.1"/>
</dbReference>
<dbReference type="RefSeq" id="NP_001367384.1">
    <molecule id="P90978-2"/>
    <property type="nucleotide sequence ID" value="NM_001381724.1"/>
</dbReference>
<dbReference type="RefSeq" id="NP_497326.2">
    <property type="nucleotide sequence ID" value="NM_064925.6"/>
</dbReference>
<dbReference type="SMR" id="P90978"/>
<dbReference type="BioGRID" id="40534">
    <property type="interactions" value="20"/>
</dbReference>
<dbReference type="FunCoup" id="P90978">
    <property type="interactions" value="2744"/>
</dbReference>
<dbReference type="IntAct" id="P90978">
    <property type="interactions" value="7"/>
</dbReference>
<dbReference type="STRING" id="6239.Y92C3B.2a.1"/>
<dbReference type="iPTMnet" id="P90978"/>
<dbReference type="PaxDb" id="6239-Y92C3B.2a"/>
<dbReference type="PeptideAtlas" id="P90978"/>
<dbReference type="EnsemblMetazoa" id="Y92C3B.2a.1">
    <molecule id="P90978-1"/>
    <property type="protein sequence ID" value="Y92C3B.2a.1"/>
    <property type="gene ID" value="WBGene00006697"/>
</dbReference>
<dbReference type="EnsemblMetazoa" id="Y92C3B.2b.1">
    <molecule id="P90978-2"/>
    <property type="protein sequence ID" value="Y92C3B.2b.1"/>
    <property type="gene ID" value="WBGene00006697"/>
</dbReference>
<dbReference type="GeneID" id="175270"/>
<dbReference type="KEGG" id="cel:CELE_Y92C3B.2"/>
<dbReference type="UCSC" id="Y92C3B.2b.1">
    <molecule id="P90978-1"/>
    <property type="organism name" value="c. elegans"/>
</dbReference>
<dbReference type="AGR" id="WB:WBGene00006697"/>
<dbReference type="CTD" id="175270"/>
<dbReference type="WormBase" id="Y92C3B.2a">
    <molecule id="P90978-1"/>
    <property type="protein sequence ID" value="CE27339"/>
    <property type="gene ID" value="WBGene00006697"/>
    <property type="gene designation" value="uaf-1"/>
</dbReference>
<dbReference type="WormBase" id="Y92C3B.2b">
    <molecule id="P90978-2"/>
    <property type="protein sequence ID" value="CE25626"/>
    <property type="gene ID" value="WBGene00006697"/>
    <property type="gene designation" value="uaf-1"/>
</dbReference>
<dbReference type="eggNOG" id="KOG0120">
    <property type="taxonomic scope" value="Eukaryota"/>
</dbReference>
<dbReference type="GeneTree" id="ENSGT00940000155556"/>
<dbReference type="InParanoid" id="P90978"/>
<dbReference type="OMA" id="MTQWDIK"/>
<dbReference type="OrthoDB" id="10266058at2759"/>
<dbReference type="PhylomeDB" id="P90978"/>
<dbReference type="Reactome" id="R-CEL-159236">
    <property type="pathway name" value="Transport of Mature mRNA derived from an Intron-Containing Transcript"/>
</dbReference>
<dbReference type="Reactome" id="R-CEL-72187">
    <property type="pathway name" value="mRNA 3'-end processing"/>
</dbReference>
<dbReference type="Reactome" id="R-CEL-73856">
    <property type="pathway name" value="RNA Polymerase II Transcription Termination"/>
</dbReference>
<dbReference type="Reactome" id="R-CEL-9629569">
    <property type="pathway name" value="Protein hydroxylation"/>
</dbReference>
<dbReference type="PRO" id="PR:P90978"/>
<dbReference type="Proteomes" id="UP000001940">
    <property type="component" value="Chromosome III"/>
</dbReference>
<dbReference type="Bgee" id="WBGene00006697">
    <property type="expression patterns" value="Expressed in pharyngeal muscle cell (C elegans) and 4 other cell types or tissues"/>
</dbReference>
<dbReference type="GO" id="GO:0000243">
    <property type="term" value="C:commitment complex"/>
    <property type="evidence" value="ECO:0000318"/>
    <property type="project" value="GO_Central"/>
</dbReference>
<dbReference type="GO" id="GO:0016607">
    <property type="term" value="C:nuclear speck"/>
    <property type="evidence" value="ECO:0000318"/>
    <property type="project" value="GO_Central"/>
</dbReference>
<dbReference type="GO" id="GO:0005654">
    <property type="term" value="C:nucleoplasm"/>
    <property type="evidence" value="ECO:0000314"/>
    <property type="project" value="WormBase"/>
</dbReference>
<dbReference type="GO" id="GO:0005681">
    <property type="term" value="C:spliceosomal complex"/>
    <property type="evidence" value="ECO:0000250"/>
    <property type="project" value="WormBase"/>
</dbReference>
<dbReference type="GO" id="GO:0071004">
    <property type="term" value="C:U2-type prespliceosome"/>
    <property type="evidence" value="ECO:0000318"/>
    <property type="project" value="GO_Central"/>
</dbReference>
<dbReference type="GO" id="GO:0089701">
    <property type="term" value="C:U2AF complex"/>
    <property type="evidence" value="ECO:0000318"/>
    <property type="project" value="GO_Central"/>
</dbReference>
<dbReference type="GO" id="GO:0008187">
    <property type="term" value="F:poly-pyrimidine tract binding"/>
    <property type="evidence" value="ECO:0000318"/>
    <property type="project" value="GO_Central"/>
</dbReference>
<dbReference type="GO" id="GO:0030628">
    <property type="term" value="F:pre-mRNA 3'-splice site binding"/>
    <property type="evidence" value="ECO:0000314"/>
    <property type="project" value="WormBase"/>
</dbReference>
<dbReference type="GO" id="GO:0048589">
    <property type="term" value="P:developmental growth"/>
    <property type="evidence" value="ECO:0000315"/>
    <property type="project" value="WormBase"/>
</dbReference>
<dbReference type="GO" id="GO:0009792">
    <property type="term" value="P:embryo development ending in birth or egg hatching"/>
    <property type="evidence" value="ECO:0000315"/>
    <property type="project" value="WormBase"/>
</dbReference>
<dbReference type="GO" id="GO:0010172">
    <property type="term" value="P:embryonic body morphogenesis"/>
    <property type="evidence" value="ECO:0000315"/>
    <property type="project" value="WormBase"/>
</dbReference>
<dbReference type="GO" id="GO:0007281">
    <property type="term" value="P:germ cell development"/>
    <property type="evidence" value="ECO:0000315"/>
    <property type="project" value="WormBase"/>
</dbReference>
<dbReference type="GO" id="GO:0000389">
    <property type="term" value="P:mRNA 3'-splice site recognition"/>
    <property type="evidence" value="ECO:0000315"/>
    <property type="project" value="WormBase"/>
</dbReference>
<dbReference type="GO" id="GO:0002119">
    <property type="term" value="P:nematode larval development"/>
    <property type="evidence" value="ECO:0000315"/>
    <property type="project" value="WormBase"/>
</dbReference>
<dbReference type="GO" id="GO:0048024">
    <property type="term" value="P:regulation of mRNA splicing, via spliceosome"/>
    <property type="evidence" value="ECO:0000250"/>
    <property type="project" value="WormBase"/>
</dbReference>
<dbReference type="GO" id="GO:0000245">
    <property type="term" value="P:spliceosomal complex assembly"/>
    <property type="evidence" value="ECO:0000318"/>
    <property type="project" value="GO_Central"/>
</dbReference>
<dbReference type="CDD" id="cd12230">
    <property type="entry name" value="RRM1_U2AF65"/>
    <property type="match status" value="1"/>
</dbReference>
<dbReference type="CDD" id="cd12231">
    <property type="entry name" value="RRM2_U2AF65"/>
    <property type="match status" value="1"/>
</dbReference>
<dbReference type="CDD" id="cd12232">
    <property type="entry name" value="RRM3_U2AF65"/>
    <property type="match status" value="1"/>
</dbReference>
<dbReference type="FunFam" id="3.30.70.330:FF:000074">
    <property type="entry name" value="U2 snRNP auxiliary factor large subunit"/>
    <property type="match status" value="1"/>
</dbReference>
<dbReference type="FunFam" id="3.30.70.330:FF:000097">
    <property type="entry name" value="U2 snRNP auxiliary factor large subunit"/>
    <property type="match status" value="1"/>
</dbReference>
<dbReference type="Gene3D" id="3.30.70.330">
    <property type="match status" value="3"/>
</dbReference>
<dbReference type="InterPro" id="IPR012677">
    <property type="entry name" value="Nucleotide-bd_a/b_plait_sf"/>
</dbReference>
<dbReference type="InterPro" id="IPR035979">
    <property type="entry name" value="RBD_domain_sf"/>
</dbReference>
<dbReference type="InterPro" id="IPR000504">
    <property type="entry name" value="RRM_dom"/>
</dbReference>
<dbReference type="InterPro" id="IPR006529">
    <property type="entry name" value="U2AF_lg"/>
</dbReference>
<dbReference type="NCBIfam" id="TIGR01642">
    <property type="entry name" value="U2AF_lg"/>
    <property type="match status" value="1"/>
</dbReference>
<dbReference type="PANTHER" id="PTHR23139">
    <property type="entry name" value="RNA-BINDING PROTEIN"/>
    <property type="match status" value="1"/>
</dbReference>
<dbReference type="Pfam" id="PF00076">
    <property type="entry name" value="RRM_1"/>
    <property type="match status" value="2"/>
</dbReference>
<dbReference type="SMART" id="SM00360">
    <property type="entry name" value="RRM"/>
    <property type="match status" value="3"/>
</dbReference>
<dbReference type="SUPFAM" id="SSF54928">
    <property type="entry name" value="RNA-binding domain, RBD"/>
    <property type="match status" value="2"/>
</dbReference>
<dbReference type="PROSITE" id="PS50102">
    <property type="entry name" value="RRM"/>
    <property type="match status" value="3"/>
</dbReference>